<accession>P45913</accession>
<name>YQAP_BACSU</name>
<evidence type="ECO:0000256" key="1">
    <source>
        <dbReference type="SAM" id="MobiDB-lite"/>
    </source>
</evidence>
<protein>
    <recommendedName>
        <fullName>Uncharacterized protein YqaP</fullName>
    </recommendedName>
</protein>
<reference key="1">
    <citation type="journal article" date="1995" name="Microbiology">
        <title>Complete nucleotide sequence of a skin element excised by DNA rearrangement during sporulation in Bacillus subtilis.</title>
        <authorList>
            <person name="Takemaru K."/>
            <person name="Mizuno M."/>
            <person name="Sato T."/>
            <person name="Takeuchi M."/>
            <person name="Kobayashi Y."/>
        </authorList>
    </citation>
    <scope>NUCLEOTIDE SEQUENCE [GENOMIC DNA]</scope>
    <source>
        <strain>168 / JH642</strain>
    </source>
</reference>
<reference key="2">
    <citation type="journal article" date="1996" name="Microbiology">
        <title>Systematic sequencing of the 283 kb 210 degrees-232 degrees region of the Bacillus subtilis genome containing the skin element and many sporulation genes.</title>
        <authorList>
            <person name="Mizuno M."/>
            <person name="Masuda S."/>
            <person name="Takemaru K."/>
            <person name="Hosono S."/>
            <person name="Sato T."/>
            <person name="Takeuchi M."/>
            <person name="Kobayashi Y."/>
        </authorList>
    </citation>
    <scope>NUCLEOTIDE SEQUENCE [GENOMIC DNA]</scope>
    <source>
        <strain>168 / JH642</strain>
    </source>
</reference>
<reference key="3">
    <citation type="journal article" date="1997" name="Nature">
        <title>The complete genome sequence of the Gram-positive bacterium Bacillus subtilis.</title>
        <authorList>
            <person name="Kunst F."/>
            <person name="Ogasawara N."/>
            <person name="Moszer I."/>
            <person name="Albertini A.M."/>
            <person name="Alloni G."/>
            <person name="Azevedo V."/>
            <person name="Bertero M.G."/>
            <person name="Bessieres P."/>
            <person name="Bolotin A."/>
            <person name="Borchert S."/>
            <person name="Borriss R."/>
            <person name="Boursier L."/>
            <person name="Brans A."/>
            <person name="Braun M."/>
            <person name="Brignell S.C."/>
            <person name="Bron S."/>
            <person name="Brouillet S."/>
            <person name="Bruschi C.V."/>
            <person name="Caldwell B."/>
            <person name="Capuano V."/>
            <person name="Carter N.M."/>
            <person name="Choi S.-K."/>
            <person name="Codani J.-J."/>
            <person name="Connerton I.F."/>
            <person name="Cummings N.J."/>
            <person name="Daniel R.A."/>
            <person name="Denizot F."/>
            <person name="Devine K.M."/>
            <person name="Duesterhoeft A."/>
            <person name="Ehrlich S.D."/>
            <person name="Emmerson P.T."/>
            <person name="Entian K.-D."/>
            <person name="Errington J."/>
            <person name="Fabret C."/>
            <person name="Ferrari E."/>
            <person name="Foulger D."/>
            <person name="Fritz C."/>
            <person name="Fujita M."/>
            <person name="Fujita Y."/>
            <person name="Fuma S."/>
            <person name="Galizzi A."/>
            <person name="Galleron N."/>
            <person name="Ghim S.-Y."/>
            <person name="Glaser P."/>
            <person name="Goffeau A."/>
            <person name="Golightly E.J."/>
            <person name="Grandi G."/>
            <person name="Guiseppi G."/>
            <person name="Guy B.J."/>
            <person name="Haga K."/>
            <person name="Haiech J."/>
            <person name="Harwood C.R."/>
            <person name="Henaut A."/>
            <person name="Hilbert H."/>
            <person name="Holsappel S."/>
            <person name="Hosono S."/>
            <person name="Hullo M.-F."/>
            <person name="Itaya M."/>
            <person name="Jones L.-M."/>
            <person name="Joris B."/>
            <person name="Karamata D."/>
            <person name="Kasahara Y."/>
            <person name="Klaerr-Blanchard M."/>
            <person name="Klein C."/>
            <person name="Kobayashi Y."/>
            <person name="Koetter P."/>
            <person name="Koningstein G."/>
            <person name="Krogh S."/>
            <person name="Kumano M."/>
            <person name="Kurita K."/>
            <person name="Lapidus A."/>
            <person name="Lardinois S."/>
            <person name="Lauber J."/>
            <person name="Lazarevic V."/>
            <person name="Lee S.-M."/>
            <person name="Levine A."/>
            <person name="Liu H."/>
            <person name="Masuda S."/>
            <person name="Mauel C."/>
            <person name="Medigue C."/>
            <person name="Medina N."/>
            <person name="Mellado R.P."/>
            <person name="Mizuno M."/>
            <person name="Moestl D."/>
            <person name="Nakai S."/>
            <person name="Noback M."/>
            <person name="Noone D."/>
            <person name="O'Reilly M."/>
            <person name="Ogawa K."/>
            <person name="Ogiwara A."/>
            <person name="Oudega B."/>
            <person name="Park S.-H."/>
            <person name="Parro V."/>
            <person name="Pohl T.M."/>
            <person name="Portetelle D."/>
            <person name="Porwollik S."/>
            <person name="Prescott A.M."/>
            <person name="Presecan E."/>
            <person name="Pujic P."/>
            <person name="Purnelle B."/>
            <person name="Rapoport G."/>
            <person name="Rey M."/>
            <person name="Reynolds S."/>
            <person name="Rieger M."/>
            <person name="Rivolta C."/>
            <person name="Rocha E."/>
            <person name="Roche B."/>
            <person name="Rose M."/>
            <person name="Sadaie Y."/>
            <person name="Sato T."/>
            <person name="Scanlan E."/>
            <person name="Schleich S."/>
            <person name="Schroeter R."/>
            <person name="Scoffone F."/>
            <person name="Sekiguchi J."/>
            <person name="Sekowska A."/>
            <person name="Seror S.J."/>
            <person name="Serror P."/>
            <person name="Shin B.-S."/>
            <person name="Soldo B."/>
            <person name="Sorokin A."/>
            <person name="Tacconi E."/>
            <person name="Takagi T."/>
            <person name="Takahashi H."/>
            <person name="Takemaru K."/>
            <person name="Takeuchi M."/>
            <person name="Tamakoshi A."/>
            <person name="Tanaka T."/>
            <person name="Terpstra P."/>
            <person name="Tognoni A."/>
            <person name="Tosato V."/>
            <person name="Uchiyama S."/>
            <person name="Vandenbol M."/>
            <person name="Vannier F."/>
            <person name="Vassarotti A."/>
            <person name="Viari A."/>
            <person name="Wambutt R."/>
            <person name="Wedler E."/>
            <person name="Wedler H."/>
            <person name="Weitzenegger T."/>
            <person name="Winters P."/>
            <person name="Wipat A."/>
            <person name="Yamamoto H."/>
            <person name="Yamane K."/>
            <person name="Yasumoto K."/>
            <person name="Yata K."/>
            <person name="Yoshida K."/>
            <person name="Yoshikawa H.-F."/>
            <person name="Zumstein E."/>
            <person name="Yoshikawa H."/>
            <person name="Danchin A."/>
        </authorList>
    </citation>
    <scope>NUCLEOTIDE SEQUENCE [LARGE SCALE GENOMIC DNA]</scope>
    <source>
        <strain>168</strain>
    </source>
</reference>
<reference key="4">
    <citation type="journal article" date="1995" name="Gene">
        <title>Analysis of a Bacillus subtilis genome fragment using a co-operative computer system prototype.</title>
        <authorList>
            <person name="Medigue C."/>
            <person name="Moszer I."/>
            <person name="Viari A."/>
            <person name="Danchin A."/>
        </authorList>
    </citation>
    <scope>IDENTIFICATION</scope>
</reference>
<proteinExistence type="predicted"/>
<gene>
    <name type="primary">yqaP</name>
    <name type="ordered locus">BSU26230</name>
</gene>
<organism>
    <name type="scientific">Bacillus subtilis (strain 168)</name>
    <dbReference type="NCBI Taxonomy" id="224308"/>
    <lineage>
        <taxon>Bacteria</taxon>
        <taxon>Bacillati</taxon>
        <taxon>Bacillota</taxon>
        <taxon>Bacilli</taxon>
        <taxon>Bacillales</taxon>
        <taxon>Bacillaceae</taxon>
        <taxon>Bacillus</taxon>
    </lineage>
</organism>
<sequence>MRVREIKNLLDNYNKQIGVSVSHVPHSNRKTVLNLQKSLDAINELSKLGFLDDDIERFKDLGSIYYSRVPEDKIEVDNHIANQITNHIKIVKEKLRGFGILIDQSVSDQNENVISVKLPQYNSLEELEKFIKKLNNAFQNGITLEEINGHYKLQGFDTGSMWIDILVNSSAAVIFVGQLIDAAINISKRSQELLITKANIEKLALQNEQLKLQVETSKALLDGIEKGIDTITDAEIKNVTEGANYSTESIGHIKQSVKIFAELLHEGTQFHPSLDAPSETVEAFPEPQKNLEEPQQLLETLADNLPEQE</sequence>
<keyword id="KW-1185">Reference proteome</keyword>
<feature type="chain" id="PRO_0000049747" description="Uncharacterized protein YqaP">
    <location>
        <begin position="1"/>
        <end position="309"/>
    </location>
</feature>
<feature type="region of interest" description="Disordered" evidence="1">
    <location>
        <begin position="272"/>
        <end position="291"/>
    </location>
</feature>
<dbReference type="EMBL" id="D32216">
    <property type="protein sequence ID" value="BAA06929.1"/>
    <property type="molecule type" value="Genomic_DNA"/>
</dbReference>
<dbReference type="EMBL" id="D84432">
    <property type="protein sequence ID" value="BAA12391.1"/>
    <property type="molecule type" value="Genomic_DNA"/>
</dbReference>
<dbReference type="EMBL" id="AL009126">
    <property type="protein sequence ID" value="CAB14564.1"/>
    <property type="molecule type" value="Genomic_DNA"/>
</dbReference>
<dbReference type="PIR" id="G69945">
    <property type="entry name" value="G69945"/>
</dbReference>
<dbReference type="RefSeq" id="NP_390500.1">
    <property type="nucleotide sequence ID" value="NC_000964.3"/>
</dbReference>
<dbReference type="RefSeq" id="WP_003229913.1">
    <property type="nucleotide sequence ID" value="NZ_OZ025638.1"/>
</dbReference>
<dbReference type="FunCoup" id="P45913">
    <property type="interactions" value="13"/>
</dbReference>
<dbReference type="IntAct" id="P45913">
    <property type="interactions" value="1"/>
</dbReference>
<dbReference type="MINT" id="P45913"/>
<dbReference type="STRING" id="224308.BSU26230"/>
<dbReference type="jPOST" id="P45913"/>
<dbReference type="PaxDb" id="224308-BSU26230"/>
<dbReference type="EnsemblBacteria" id="CAB14564">
    <property type="protein sequence ID" value="CAB14564"/>
    <property type="gene ID" value="BSU_26230"/>
</dbReference>
<dbReference type="GeneID" id="937705"/>
<dbReference type="KEGG" id="bsu:BSU26230"/>
<dbReference type="PATRIC" id="fig|224308.179.peg.2849"/>
<dbReference type="eggNOG" id="ENOG5033CKC">
    <property type="taxonomic scope" value="Bacteria"/>
</dbReference>
<dbReference type="InParanoid" id="P45913"/>
<dbReference type="OrthoDB" id="2971947at2"/>
<dbReference type="BioCyc" id="BSUB:BSU26230-MONOMER"/>
<dbReference type="Proteomes" id="UP000001570">
    <property type="component" value="Chromosome"/>
</dbReference>